<evidence type="ECO:0000255" key="1">
    <source>
        <dbReference type="HAMAP-Rule" id="MF_00564"/>
    </source>
</evidence>
<evidence type="ECO:0000305" key="2"/>
<protein>
    <recommendedName>
        <fullName evidence="1">Ribonuclease PH</fullName>
        <shortName evidence="1">RNase PH</shortName>
        <ecNumber evidence="1">2.7.7.56</ecNumber>
    </recommendedName>
    <alternativeName>
        <fullName evidence="1">tRNA nucleotidyltransferase</fullName>
    </alternativeName>
</protein>
<sequence>MLFCCIICSVLRKNSRAHDEIRPVKIIRGWNIYAEGSALIAFGNTRVLCNATFQRGVPPFLRGQRSGWITAEYAMLPRSGTERSDRESVKGKISGRSHEISRLIGRSMRAILDRYALEENTIILDCDVLQADGGTRTAAITGSYIALYDALVWAKNQKILSKHPLTDSVSAVSVGLVGDQIFLDLDYSEDSNAQADINLVFTGSGKLVEIQGTAEKSPFSYGQFEQMMELAKTGCQALKEIQAASLD</sequence>
<keyword id="KW-0548">Nucleotidyltransferase</keyword>
<keyword id="KW-0694">RNA-binding</keyword>
<keyword id="KW-0698">rRNA processing</keyword>
<keyword id="KW-0808">Transferase</keyword>
<keyword id="KW-0819">tRNA processing</keyword>
<keyword id="KW-0820">tRNA-binding</keyword>
<accession>Q83HF6</accession>
<dbReference type="EC" id="2.7.7.56" evidence="1"/>
<dbReference type="EMBL" id="BX251412">
    <property type="protein sequence ID" value="CAD67303.1"/>
    <property type="status" value="ALT_INIT"/>
    <property type="molecule type" value="Genomic_DNA"/>
</dbReference>
<dbReference type="RefSeq" id="WP_033800110.1">
    <property type="nucleotide sequence ID" value="NC_004551.1"/>
</dbReference>
<dbReference type="SMR" id="Q83HF6"/>
<dbReference type="GeneID" id="67388418"/>
<dbReference type="KEGG" id="tws:TW640"/>
<dbReference type="HOGENOM" id="CLU_050858_0_0_11"/>
<dbReference type="GO" id="GO:0000175">
    <property type="term" value="F:3'-5'-RNA exonuclease activity"/>
    <property type="evidence" value="ECO:0007669"/>
    <property type="project" value="UniProtKB-UniRule"/>
</dbReference>
<dbReference type="GO" id="GO:0000049">
    <property type="term" value="F:tRNA binding"/>
    <property type="evidence" value="ECO:0007669"/>
    <property type="project" value="UniProtKB-UniRule"/>
</dbReference>
<dbReference type="GO" id="GO:0009022">
    <property type="term" value="F:tRNA nucleotidyltransferase activity"/>
    <property type="evidence" value="ECO:0007669"/>
    <property type="project" value="UniProtKB-UniRule"/>
</dbReference>
<dbReference type="GO" id="GO:0016075">
    <property type="term" value="P:rRNA catabolic process"/>
    <property type="evidence" value="ECO:0007669"/>
    <property type="project" value="UniProtKB-UniRule"/>
</dbReference>
<dbReference type="GO" id="GO:0006364">
    <property type="term" value="P:rRNA processing"/>
    <property type="evidence" value="ECO:0007669"/>
    <property type="project" value="UniProtKB-KW"/>
</dbReference>
<dbReference type="GO" id="GO:0008033">
    <property type="term" value="P:tRNA processing"/>
    <property type="evidence" value="ECO:0007669"/>
    <property type="project" value="UniProtKB-UniRule"/>
</dbReference>
<dbReference type="CDD" id="cd11362">
    <property type="entry name" value="RNase_PH_bact"/>
    <property type="match status" value="1"/>
</dbReference>
<dbReference type="FunFam" id="3.30.230.70:FF:000003">
    <property type="entry name" value="Ribonuclease PH"/>
    <property type="match status" value="1"/>
</dbReference>
<dbReference type="Gene3D" id="3.30.230.70">
    <property type="entry name" value="GHMP Kinase, N-terminal domain"/>
    <property type="match status" value="1"/>
</dbReference>
<dbReference type="HAMAP" id="MF_00564">
    <property type="entry name" value="RNase_PH"/>
    <property type="match status" value="1"/>
</dbReference>
<dbReference type="InterPro" id="IPR001247">
    <property type="entry name" value="ExoRNase_PH_dom1"/>
</dbReference>
<dbReference type="InterPro" id="IPR015847">
    <property type="entry name" value="ExoRNase_PH_dom2"/>
</dbReference>
<dbReference type="InterPro" id="IPR036345">
    <property type="entry name" value="ExoRNase_PH_dom2_sf"/>
</dbReference>
<dbReference type="InterPro" id="IPR027408">
    <property type="entry name" value="PNPase/RNase_PH_dom_sf"/>
</dbReference>
<dbReference type="InterPro" id="IPR020568">
    <property type="entry name" value="Ribosomal_Su5_D2-typ_SF"/>
</dbReference>
<dbReference type="InterPro" id="IPR050080">
    <property type="entry name" value="RNase_PH"/>
</dbReference>
<dbReference type="InterPro" id="IPR002381">
    <property type="entry name" value="RNase_PH_bac-type"/>
</dbReference>
<dbReference type="InterPro" id="IPR018336">
    <property type="entry name" value="RNase_PH_CS"/>
</dbReference>
<dbReference type="NCBIfam" id="TIGR01966">
    <property type="entry name" value="RNasePH"/>
    <property type="match status" value="1"/>
</dbReference>
<dbReference type="PANTHER" id="PTHR11953">
    <property type="entry name" value="EXOSOME COMPLEX COMPONENT"/>
    <property type="match status" value="1"/>
</dbReference>
<dbReference type="PANTHER" id="PTHR11953:SF0">
    <property type="entry name" value="EXOSOME COMPLEX COMPONENT RRP41"/>
    <property type="match status" value="1"/>
</dbReference>
<dbReference type="Pfam" id="PF01138">
    <property type="entry name" value="RNase_PH"/>
    <property type="match status" value="1"/>
</dbReference>
<dbReference type="Pfam" id="PF03725">
    <property type="entry name" value="RNase_PH_C"/>
    <property type="match status" value="1"/>
</dbReference>
<dbReference type="SUPFAM" id="SSF55666">
    <property type="entry name" value="Ribonuclease PH domain 2-like"/>
    <property type="match status" value="1"/>
</dbReference>
<dbReference type="SUPFAM" id="SSF54211">
    <property type="entry name" value="Ribosomal protein S5 domain 2-like"/>
    <property type="match status" value="1"/>
</dbReference>
<dbReference type="PROSITE" id="PS01277">
    <property type="entry name" value="RIBONUCLEASE_PH"/>
    <property type="match status" value="1"/>
</dbReference>
<gene>
    <name evidence="1" type="primary">rph</name>
    <name type="ordered locus">TW640</name>
</gene>
<name>RNPH_TROW8</name>
<reference key="1">
    <citation type="journal article" date="2003" name="Lancet">
        <title>Sequencing and analysis of the genome of the Whipple's disease bacterium Tropheryma whipplei.</title>
        <authorList>
            <person name="Bentley S.D."/>
            <person name="Maiwald M."/>
            <person name="Murphy L.D."/>
            <person name="Pallen M.J."/>
            <person name="Yeats C.A."/>
            <person name="Dover L.G."/>
            <person name="Norbertczak H.T."/>
            <person name="Besra G.S."/>
            <person name="Quail M.A."/>
            <person name="Harris D.E."/>
            <person name="von Herbay A."/>
            <person name="Goble A."/>
            <person name="Rutter S."/>
            <person name="Squares R."/>
            <person name="Squares S."/>
            <person name="Barrell B.G."/>
            <person name="Parkhill J."/>
            <person name="Relman D.A."/>
        </authorList>
    </citation>
    <scope>NUCLEOTIDE SEQUENCE [LARGE SCALE GENOMIC DNA]</scope>
    <source>
        <strain>TW08/27</strain>
    </source>
</reference>
<proteinExistence type="inferred from homology"/>
<organism>
    <name type="scientific">Tropheryma whipplei (strain TW08/27)</name>
    <name type="common">Whipple's bacillus</name>
    <dbReference type="NCBI Taxonomy" id="218496"/>
    <lineage>
        <taxon>Bacteria</taxon>
        <taxon>Bacillati</taxon>
        <taxon>Actinomycetota</taxon>
        <taxon>Actinomycetes</taxon>
        <taxon>Micrococcales</taxon>
        <taxon>Tropherymataceae</taxon>
        <taxon>Tropheryma</taxon>
    </lineage>
</organism>
<comment type="function">
    <text evidence="1">Phosphorolytic 3'-5' exoribonuclease that plays an important role in tRNA 3'-end maturation. Removes nucleotide residues following the 3'-CCA terminus of tRNAs; can also add nucleotides to the ends of RNA molecules by using nucleoside diphosphates as substrates, but this may not be physiologically important. Probably plays a role in initiation of 16S rRNA degradation (leading to ribosome degradation) during starvation.</text>
</comment>
<comment type="catalytic activity">
    <reaction evidence="1">
        <text>tRNA(n+1) + phosphate = tRNA(n) + a ribonucleoside 5'-diphosphate</text>
        <dbReference type="Rhea" id="RHEA:10628"/>
        <dbReference type="Rhea" id="RHEA-COMP:17343"/>
        <dbReference type="Rhea" id="RHEA-COMP:17344"/>
        <dbReference type="ChEBI" id="CHEBI:43474"/>
        <dbReference type="ChEBI" id="CHEBI:57930"/>
        <dbReference type="ChEBI" id="CHEBI:173114"/>
        <dbReference type="EC" id="2.7.7.56"/>
    </reaction>
</comment>
<comment type="subunit">
    <text evidence="1">Homohexameric ring arranged as a trimer of dimers.</text>
</comment>
<comment type="similarity">
    <text evidence="1">Belongs to the RNase PH family.</text>
</comment>
<comment type="sequence caution" evidence="2">
    <conflict type="erroneous initiation">
        <sequence resource="EMBL-CDS" id="CAD67303"/>
    </conflict>
    <text>Extended N-terminus.</text>
</comment>
<feature type="chain" id="PRO_0000139945" description="Ribonuclease PH">
    <location>
        <begin position="1"/>
        <end position="247"/>
    </location>
</feature>
<feature type="binding site" evidence="1">
    <location>
        <position position="96"/>
    </location>
    <ligand>
        <name>phosphate</name>
        <dbReference type="ChEBI" id="CHEBI:43474"/>
        <note>substrate</note>
    </ligand>
</feature>
<feature type="binding site" evidence="1">
    <location>
        <begin position="134"/>
        <end position="136"/>
    </location>
    <ligand>
        <name>phosphate</name>
        <dbReference type="ChEBI" id="CHEBI:43474"/>
        <note>substrate</note>
    </ligand>
</feature>